<dbReference type="EC" id="5.3.3.2" evidence="1"/>
<dbReference type="EMBL" id="CP001033">
    <property type="protein sequence ID" value="ACB89631.1"/>
    <property type="molecule type" value="Genomic_DNA"/>
</dbReference>
<dbReference type="RefSeq" id="WP_000210618.1">
    <property type="nucleotide sequence ID" value="NC_010582.1"/>
</dbReference>
<dbReference type="PDB" id="4N02">
    <property type="method" value="X-ray"/>
    <property type="resolution" value="1.40 A"/>
    <property type="chains" value="A=2-336"/>
</dbReference>
<dbReference type="PDBsum" id="4N02"/>
<dbReference type="SMR" id="B2ILS5"/>
<dbReference type="KEGG" id="spw:SPCG_0379"/>
<dbReference type="HOGENOM" id="CLU_065515_0_0_9"/>
<dbReference type="BRENDA" id="5.3.3.2">
    <property type="organism ID" value="1960"/>
</dbReference>
<dbReference type="EvolutionaryTrace" id="B2ILS5"/>
<dbReference type="GO" id="GO:0005737">
    <property type="term" value="C:cytoplasm"/>
    <property type="evidence" value="ECO:0007669"/>
    <property type="project" value="UniProtKB-SubCell"/>
</dbReference>
<dbReference type="GO" id="GO:0010181">
    <property type="term" value="F:FMN binding"/>
    <property type="evidence" value="ECO:0007669"/>
    <property type="project" value="UniProtKB-UniRule"/>
</dbReference>
<dbReference type="GO" id="GO:0004452">
    <property type="term" value="F:isopentenyl-diphosphate delta-isomerase activity"/>
    <property type="evidence" value="ECO:0007669"/>
    <property type="project" value="UniProtKB-UniRule"/>
</dbReference>
<dbReference type="GO" id="GO:0000287">
    <property type="term" value="F:magnesium ion binding"/>
    <property type="evidence" value="ECO:0007669"/>
    <property type="project" value="UniProtKB-UniRule"/>
</dbReference>
<dbReference type="GO" id="GO:0070402">
    <property type="term" value="F:NADPH binding"/>
    <property type="evidence" value="ECO:0007669"/>
    <property type="project" value="UniProtKB-UniRule"/>
</dbReference>
<dbReference type="GO" id="GO:0016491">
    <property type="term" value="F:oxidoreductase activity"/>
    <property type="evidence" value="ECO:0007669"/>
    <property type="project" value="InterPro"/>
</dbReference>
<dbReference type="GO" id="GO:0008299">
    <property type="term" value="P:isoprenoid biosynthetic process"/>
    <property type="evidence" value="ECO:0007669"/>
    <property type="project" value="UniProtKB-UniRule"/>
</dbReference>
<dbReference type="CDD" id="cd02811">
    <property type="entry name" value="IDI-2_FMN"/>
    <property type="match status" value="1"/>
</dbReference>
<dbReference type="Gene3D" id="3.20.20.70">
    <property type="entry name" value="Aldolase class I"/>
    <property type="match status" value="1"/>
</dbReference>
<dbReference type="HAMAP" id="MF_00354">
    <property type="entry name" value="Idi_2"/>
    <property type="match status" value="1"/>
</dbReference>
<dbReference type="InterPro" id="IPR013785">
    <property type="entry name" value="Aldolase_TIM"/>
</dbReference>
<dbReference type="InterPro" id="IPR000262">
    <property type="entry name" value="FMN-dep_DH"/>
</dbReference>
<dbReference type="InterPro" id="IPR011179">
    <property type="entry name" value="IPdP_isomerase"/>
</dbReference>
<dbReference type="NCBIfam" id="TIGR02151">
    <property type="entry name" value="IPP_isom_2"/>
    <property type="match status" value="1"/>
</dbReference>
<dbReference type="PANTHER" id="PTHR43665">
    <property type="entry name" value="ISOPENTENYL-DIPHOSPHATE DELTA-ISOMERASE"/>
    <property type="match status" value="1"/>
</dbReference>
<dbReference type="PANTHER" id="PTHR43665:SF1">
    <property type="entry name" value="ISOPENTENYL-DIPHOSPHATE DELTA-ISOMERASE"/>
    <property type="match status" value="1"/>
</dbReference>
<dbReference type="Pfam" id="PF01070">
    <property type="entry name" value="FMN_dh"/>
    <property type="match status" value="1"/>
</dbReference>
<dbReference type="PIRSF" id="PIRSF003314">
    <property type="entry name" value="IPP_isomerase"/>
    <property type="match status" value="1"/>
</dbReference>
<dbReference type="SUPFAM" id="SSF51395">
    <property type="entry name" value="FMN-linked oxidoreductases"/>
    <property type="match status" value="1"/>
</dbReference>
<comment type="function">
    <text evidence="1">Involved in the biosynthesis of isoprenoids. Catalyzes the 1,3-allylic rearrangement of the homoallylic substrate isopentenyl (IPP) to its allylic isomer, dimethylallyl diphosphate (DMAPP).</text>
</comment>
<comment type="catalytic activity">
    <reaction evidence="1">
        <text>isopentenyl diphosphate = dimethylallyl diphosphate</text>
        <dbReference type="Rhea" id="RHEA:23284"/>
        <dbReference type="ChEBI" id="CHEBI:57623"/>
        <dbReference type="ChEBI" id="CHEBI:128769"/>
        <dbReference type="EC" id="5.3.3.2"/>
    </reaction>
</comment>
<comment type="cofactor">
    <cofactor evidence="1">
        <name>FMN</name>
        <dbReference type="ChEBI" id="CHEBI:58210"/>
    </cofactor>
</comment>
<comment type="cofactor">
    <cofactor evidence="1">
        <name>NADPH</name>
        <dbReference type="ChEBI" id="CHEBI:57783"/>
    </cofactor>
</comment>
<comment type="cofactor">
    <cofactor evidence="1">
        <name>Mg(2+)</name>
        <dbReference type="ChEBI" id="CHEBI:18420"/>
    </cofactor>
</comment>
<comment type="subunit">
    <text evidence="1">Homooctamer. Dimer of tetramers.</text>
</comment>
<comment type="subcellular location">
    <subcellularLocation>
        <location evidence="1">Cytoplasm</location>
    </subcellularLocation>
</comment>
<comment type="similarity">
    <text evidence="1">Belongs to the IPP isomerase type 2 family.</text>
</comment>
<organism>
    <name type="scientific">Streptococcus pneumoniae (strain CGSP14)</name>
    <dbReference type="NCBI Taxonomy" id="516950"/>
    <lineage>
        <taxon>Bacteria</taxon>
        <taxon>Bacillati</taxon>
        <taxon>Bacillota</taxon>
        <taxon>Bacilli</taxon>
        <taxon>Lactobacillales</taxon>
        <taxon>Streptococcaceae</taxon>
        <taxon>Streptococcus</taxon>
    </lineage>
</organism>
<protein>
    <recommendedName>
        <fullName evidence="1">Isopentenyl-diphosphate delta-isomerase</fullName>
        <shortName evidence="1">IPP isomerase</shortName>
        <ecNumber evidence="1">5.3.3.2</ecNumber>
    </recommendedName>
    <alternativeName>
        <fullName evidence="1">Isopentenyl diphosphate:dimethylallyl diphosphate isomerase</fullName>
    </alternativeName>
    <alternativeName>
        <fullName evidence="1">Isopentenyl pyrophosphate isomerase</fullName>
    </alternativeName>
    <alternativeName>
        <fullName evidence="1">Type 2 isopentenyl diphosphate isomerase</fullName>
        <shortName evidence="1">IDI-2</shortName>
    </alternativeName>
</protein>
<evidence type="ECO:0000255" key="1">
    <source>
        <dbReference type="HAMAP-Rule" id="MF_00354"/>
    </source>
</evidence>
<evidence type="ECO:0007829" key="2">
    <source>
        <dbReference type="PDB" id="4N02"/>
    </source>
</evidence>
<reference key="1">
    <citation type="journal article" date="2009" name="BMC Genomics">
        <title>Genome evolution driven by host adaptations results in a more virulent and antimicrobial-resistant Streptococcus pneumoniae serotype 14.</title>
        <authorList>
            <person name="Ding F."/>
            <person name="Tang P."/>
            <person name="Hsu M.-H."/>
            <person name="Cui P."/>
            <person name="Hu S."/>
            <person name="Yu J."/>
            <person name="Chiu C.-H."/>
        </authorList>
    </citation>
    <scope>NUCLEOTIDE SEQUENCE [LARGE SCALE GENOMIC DNA]</scope>
    <source>
        <strain>CGSP14</strain>
    </source>
</reference>
<sequence>MTTNRKDEHILYALEQKSSYNSFDEVELIHSSLPLYNLDEIDLSTEFAGRKWDFPFYINAMTGGSNKGREINQKLAQVAESCGILFVTGSYSAALKNPTDDSFSVKSSHPNLLLGTNIGLDKPVELGLQTVEEMNPVLLQVHVNVMQELLMPEGERKFRSWQSHLADYSKQIPVPIVLKEVGFGMDAKTIERAYEFGVRTVDLSGRGGTSFAYIENRRSGQRDYLNQWGQSTMQALLNAQEWKDKVELLVSGGVRNPLDMIKCLVFGAKAVGLSRTVLELVETYTVEEVIGIVQGWKADLRLIMCSLNCATIADLQKVDYLLYGKLKEAKDQMKKA</sequence>
<keyword id="KW-0002">3D-structure</keyword>
<keyword id="KW-0963">Cytoplasm</keyword>
<keyword id="KW-0285">Flavoprotein</keyword>
<keyword id="KW-0288">FMN</keyword>
<keyword id="KW-0413">Isomerase</keyword>
<keyword id="KW-0414">Isoprene biosynthesis</keyword>
<keyword id="KW-0460">Magnesium</keyword>
<keyword id="KW-0479">Metal-binding</keyword>
<keyword id="KW-0521">NADP</keyword>
<feature type="chain" id="PRO_1000120546" description="Isopentenyl-diphosphate delta-isomerase">
    <location>
        <begin position="1"/>
        <end position="336"/>
    </location>
</feature>
<feature type="binding site" evidence="1">
    <location>
        <begin position="5"/>
        <end position="6"/>
    </location>
    <ligand>
        <name>substrate</name>
    </ligand>
</feature>
<feature type="binding site" evidence="1">
    <location>
        <begin position="60"/>
        <end position="62"/>
    </location>
    <ligand>
        <name>FMN</name>
        <dbReference type="ChEBI" id="CHEBI:58210"/>
    </ligand>
</feature>
<feature type="binding site" evidence="1">
    <location>
        <position position="90"/>
    </location>
    <ligand>
        <name>FMN</name>
        <dbReference type="ChEBI" id="CHEBI:58210"/>
    </ligand>
</feature>
<feature type="binding site" evidence="1">
    <location>
        <position position="117"/>
    </location>
    <ligand>
        <name>FMN</name>
        <dbReference type="ChEBI" id="CHEBI:58210"/>
    </ligand>
</feature>
<feature type="binding site" evidence="1">
    <location>
        <position position="147"/>
    </location>
    <ligand>
        <name>substrate</name>
    </ligand>
</feature>
<feature type="binding site" evidence="1">
    <location>
        <position position="148"/>
    </location>
    <ligand>
        <name>Mg(2+)</name>
        <dbReference type="ChEBI" id="CHEBI:18420"/>
    </ligand>
</feature>
<feature type="binding site" evidence="1">
    <location>
        <position position="179"/>
    </location>
    <ligand>
        <name>FMN</name>
        <dbReference type="ChEBI" id="CHEBI:58210"/>
    </ligand>
</feature>
<feature type="binding site" evidence="1">
    <location>
        <position position="204"/>
    </location>
    <ligand>
        <name>FMN</name>
        <dbReference type="ChEBI" id="CHEBI:58210"/>
    </ligand>
</feature>
<feature type="binding site" evidence="1">
    <location>
        <position position="209"/>
    </location>
    <ligand>
        <name>FMN</name>
        <dbReference type="ChEBI" id="CHEBI:58210"/>
    </ligand>
</feature>
<feature type="binding site" evidence="1">
    <location>
        <begin position="253"/>
        <end position="255"/>
    </location>
    <ligand>
        <name>FMN</name>
        <dbReference type="ChEBI" id="CHEBI:58210"/>
    </ligand>
</feature>
<feature type="binding site" evidence="1">
    <location>
        <begin position="274"/>
        <end position="275"/>
    </location>
    <ligand>
        <name>FMN</name>
        <dbReference type="ChEBI" id="CHEBI:58210"/>
    </ligand>
</feature>
<feature type="helix" evidence="2">
    <location>
        <begin position="3"/>
        <end position="15"/>
    </location>
</feature>
<feature type="helix" evidence="2">
    <location>
        <begin position="22"/>
        <end position="25"/>
    </location>
</feature>
<feature type="strand" evidence="2">
    <location>
        <begin position="26"/>
        <end position="28"/>
    </location>
</feature>
<feature type="helix" evidence="2">
    <location>
        <begin position="38"/>
        <end position="40"/>
    </location>
</feature>
<feature type="strand" evidence="2">
    <location>
        <begin position="45"/>
        <end position="47"/>
    </location>
</feature>
<feature type="strand" evidence="2">
    <location>
        <begin position="50"/>
        <end position="58"/>
    </location>
</feature>
<feature type="helix" evidence="2">
    <location>
        <begin position="66"/>
        <end position="82"/>
    </location>
</feature>
<feature type="strand" evidence="2">
    <location>
        <begin position="85"/>
        <end position="90"/>
    </location>
</feature>
<feature type="helix" evidence="2">
    <location>
        <begin position="92"/>
        <end position="96"/>
    </location>
</feature>
<feature type="turn" evidence="2">
    <location>
        <begin position="106"/>
        <end position="108"/>
    </location>
</feature>
<feature type="strand" evidence="2">
    <location>
        <begin position="113"/>
        <end position="119"/>
    </location>
</feature>
<feature type="helix" evidence="2">
    <location>
        <begin position="124"/>
        <end position="134"/>
    </location>
</feature>
<feature type="strand" evidence="2">
    <location>
        <begin position="139"/>
        <end position="142"/>
    </location>
</feature>
<feature type="helix" evidence="2">
    <location>
        <begin position="145"/>
        <end position="150"/>
    </location>
</feature>
<feature type="helix" evidence="2">
    <location>
        <begin position="161"/>
        <end position="171"/>
    </location>
</feature>
<feature type="strand" evidence="2">
    <location>
        <begin position="176"/>
        <end position="179"/>
    </location>
</feature>
<feature type="helix" evidence="2">
    <location>
        <begin position="187"/>
        <end position="196"/>
    </location>
</feature>
<feature type="strand" evidence="2">
    <location>
        <begin position="200"/>
        <end position="202"/>
    </location>
</feature>
<feature type="helix" evidence="2">
    <location>
        <begin position="211"/>
        <end position="219"/>
    </location>
</feature>
<feature type="helix" evidence="2">
    <location>
        <begin position="223"/>
        <end position="225"/>
    </location>
</feature>
<feature type="helix" evidence="2">
    <location>
        <begin position="232"/>
        <end position="238"/>
    </location>
</feature>
<feature type="helix" evidence="2">
    <location>
        <begin position="240"/>
        <end position="242"/>
    </location>
</feature>
<feature type="turn" evidence="2">
    <location>
        <begin position="243"/>
        <end position="245"/>
    </location>
</feature>
<feature type="strand" evidence="2">
    <location>
        <begin position="246"/>
        <end position="253"/>
    </location>
</feature>
<feature type="helix" evidence="2">
    <location>
        <begin position="257"/>
        <end position="265"/>
    </location>
</feature>
<feature type="strand" evidence="2">
    <location>
        <begin position="269"/>
        <end position="274"/>
    </location>
</feature>
<feature type="helix" evidence="2">
    <location>
        <begin position="275"/>
        <end position="283"/>
    </location>
</feature>
<feature type="helix" evidence="2">
    <location>
        <begin position="286"/>
        <end position="306"/>
    </location>
</feature>
<feature type="helix" evidence="2">
    <location>
        <begin position="313"/>
        <end position="317"/>
    </location>
</feature>
<feature type="strand" evidence="2">
    <location>
        <begin position="320"/>
        <end position="322"/>
    </location>
</feature>
<feature type="helix" evidence="2">
    <location>
        <begin position="324"/>
        <end position="331"/>
    </location>
</feature>
<gene>
    <name evidence="1" type="primary">fni</name>
    <name type="ordered locus">SPCG_0379</name>
</gene>
<accession>B2ILS5</accession>
<name>IDI2_STRPS</name>
<proteinExistence type="evidence at protein level"/>